<proteinExistence type="evidence at protein level"/>
<name>HISZ_ACIBC</name>
<keyword id="KW-0002">3D-structure</keyword>
<keyword id="KW-0028">Amino-acid biosynthesis</keyword>
<keyword id="KW-0963">Cytoplasm</keyword>
<keyword id="KW-0368">Histidine biosynthesis</keyword>
<evidence type="ECO:0000255" key="1">
    <source>
        <dbReference type="HAMAP-Rule" id="MF_00125"/>
    </source>
</evidence>
<evidence type="ECO:0007829" key="2">
    <source>
        <dbReference type="PDB" id="8OY0"/>
    </source>
</evidence>
<dbReference type="EMBL" id="CP000863">
    <property type="protein sequence ID" value="ACC56468.1"/>
    <property type="molecule type" value="Genomic_DNA"/>
</dbReference>
<dbReference type="RefSeq" id="WP_000155680.1">
    <property type="nucleotide sequence ID" value="NZ_CP031380.1"/>
</dbReference>
<dbReference type="PDB" id="8OY0">
    <property type="method" value="X-ray"/>
    <property type="resolution" value="2.40 A"/>
    <property type="chains" value="A/B/C/D=1-388"/>
</dbReference>
<dbReference type="PDBsum" id="8OY0"/>
<dbReference type="SMR" id="B2HWK9"/>
<dbReference type="KEGG" id="abc:ACICU_01156"/>
<dbReference type="HOGENOM" id="CLU_025113_0_1_6"/>
<dbReference type="UniPathway" id="UPA00031">
    <property type="reaction ID" value="UER00006"/>
</dbReference>
<dbReference type="Proteomes" id="UP000008839">
    <property type="component" value="Chromosome"/>
</dbReference>
<dbReference type="GO" id="GO:0005737">
    <property type="term" value="C:cytoplasm"/>
    <property type="evidence" value="ECO:0007669"/>
    <property type="project" value="UniProtKB-SubCell"/>
</dbReference>
<dbReference type="GO" id="GO:0000105">
    <property type="term" value="P:L-histidine biosynthetic process"/>
    <property type="evidence" value="ECO:0007669"/>
    <property type="project" value="UniProtKB-UniRule"/>
</dbReference>
<dbReference type="Gene3D" id="3.30.930.10">
    <property type="entry name" value="Bira Bifunctional Protein, Domain 2"/>
    <property type="match status" value="1"/>
</dbReference>
<dbReference type="HAMAP" id="MF_00125">
    <property type="entry name" value="HisZ"/>
    <property type="match status" value="1"/>
</dbReference>
<dbReference type="InterPro" id="IPR045864">
    <property type="entry name" value="aa-tRNA-synth_II/BPL/LPL"/>
</dbReference>
<dbReference type="InterPro" id="IPR041715">
    <property type="entry name" value="HisRS-like_core"/>
</dbReference>
<dbReference type="InterPro" id="IPR004516">
    <property type="entry name" value="HisRS/HisZ"/>
</dbReference>
<dbReference type="InterPro" id="IPR004517">
    <property type="entry name" value="HisZ"/>
</dbReference>
<dbReference type="NCBIfam" id="NF008935">
    <property type="entry name" value="PRK12292.1-1"/>
    <property type="match status" value="1"/>
</dbReference>
<dbReference type="NCBIfam" id="NF009086">
    <property type="entry name" value="PRK12421.1"/>
    <property type="match status" value="1"/>
</dbReference>
<dbReference type="PANTHER" id="PTHR11476:SF7">
    <property type="entry name" value="HISTIDINE--TRNA LIGASE"/>
    <property type="match status" value="1"/>
</dbReference>
<dbReference type="PANTHER" id="PTHR11476">
    <property type="entry name" value="HISTIDYL-TRNA SYNTHETASE"/>
    <property type="match status" value="1"/>
</dbReference>
<dbReference type="Pfam" id="PF13393">
    <property type="entry name" value="tRNA-synt_His"/>
    <property type="match status" value="1"/>
</dbReference>
<dbReference type="PIRSF" id="PIRSF001549">
    <property type="entry name" value="His-tRNA_synth"/>
    <property type="match status" value="1"/>
</dbReference>
<dbReference type="SUPFAM" id="SSF55681">
    <property type="entry name" value="Class II aaRS and biotin synthetases"/>
    <property type="match status" value="1"/>
</dbReference>
<sequence>MTISETWLLPDGVADVLPEQAQVIEKLRREAIDFLAVRGYQLVYTPFIEYIESLSSLSESNQDLDLVTFKVIDQLSGRLLGIRADMTPQVARIDAHVRPVEGVARYCYAGTVLHTKPQNFNATRAPLQLGAELYGHDSIEADVEMVDVMLGLIENAYTLQGAHLDLGHVGLFRSLVKYAGLSKNEEHELSDLYQRKALPELAEFTQNLNMGSDFYALGRYASDLDALQAHLSADILKDAEFDAALNALKTTLEQIKNRWPALNVGIDVVELRSYHYHTGLMYAVYAPNRAAPLAQGGRYDGIGEHFGRARPATGFSCDLYALGANQFAEIETVVAPKGTEADLLKAIANARSEGLRVVQLLGNDDLSSIPYATHQLVLQNGQWNIEKI</sequence>
<feature type="chain" id="PRO_1000095440" description="ATP phosphoribosyltransferase regulatory subunit">
    <location>
        <begin position="1"/>
        <end position="388"/>
    </location>
</feature>
<feature type="helix" evidence="2">
    <location>
        <begin position="18"/>
        <end position="36"/>
    </location>
</feature>
<feature type="turn" evidence="2">
    <location>
        <begin position="37"/>
        <end position="39"/>
    </location>
</feature>
<feature type="strand" evidence="2">
    <location>
        <begin position="47"/>
        <end position="50"/>
    </location>
</feature>
<feature type="helix" evidence="2">
    <location>
        <begin position="51"/>
        <end position="54"/>
    </location>
</feature>
<feature type="strand" evidence="2">
    <location>
        <begin position="70"/>
        <end position="72"/>
    </location>
</feature>
<feature type="turn" evidence="2">
    <location>
        <begin position="74"/>
        <end position="76"/>
    </location>
</feature>
<feature type="strand" evidence="2">
    <location>
        <begin position="79"/>
        <end position="82"/>
    </location>
</feature>
<feature type="helix" evidence="2">
    <location>
        <begin position="87"/>
        <end position="95"/>
    </location>
</feature>
<feature type="strand" evidence="2">
    <location>
        <begin position="104"/>
        <end position="111"/>
    </location>
</feature>
<feature type="strand" evidence="2">
    <location>
        <begin position="127"/>
        <end position="135"/>
    </location>
</feature>
<feature type="helix" evidence="2">
    <location>
        <begin position="140"/>
        <end position="156"/>
    </location>
</feature>
<feature type="strand" evidence="2">
    <location>
        <begin position="163"/>
        <end position="168"/>
    </location>
</feature>
<feature type="helix" evidence="2">
    <location>
        <begin position="170"/>
        <end position="179"/>
    </location>
</feature>
<feature type="helix" evidence="2">
    <location>
        <begin position="183"/>
        <end position="194"/>
    </location>
</feature>
<feature type="helix" evidence="2">
    <location>
        <begin position="198"/>
        <end position="206"/>
    </location>
</feature>
<feature type="helix" evidence="2">
    <location>
        <begin position="211"/>
        <end position="219"/>
    </location>
</feature>
<feature type="turn" evidence="2">
    <location>
        <begin position="220"/>
        <end position="222"/>
    </location>
</feature>
<feature type="helix" evidence="2">
    <location>
        <begin position="224"/>
        <end position="230"/>
    </location>
</feature>
<feature type="helix" evidence="2">
    <location>
        <begin position="233"/>
        <end position="237"/>
    </location>
</feature>
<feature type="helix" evidence="2">
    <location>
        <begin position="239"/>
        <end position="258"/>
    </location>
</feature>
<feature type="strand" evidence="2">
    <location>
        <begin position="262"/>
        <end position="266"/>
    </location>
</feature>
<feature type="turn" evidence="2">
    <location>
        <begin position="272"/>
        <end position="276"/>
    </location>
</feature>
<feature type="strand" evidence="2">
    <location>
        <begin position="279"/>
        <end position="285"/>
    </location>
</feature>
<feature type="strand" evidence="2">
    <location>
        <begin position="293"/>
        <end position="298"/>
    </location>
</feature>
<feature type="turn" evidence="2">
    <location>
        <begin position="300"/>
        <end position="303"/>
    </location>
</feature>
<feature type="helix" evidence="2">
    <location>
        <begin position="304"/>
        <end position="306"/>
    </location>
</feature>
<feature type="strand" evidence="2">
    <location>
        <begin position="312"/>
        <end position="318"/>
    </location>
</feature>
<feature type="helix" evidence="2">
    <location>
        <begin position="319"/>
        <end position="322"/>
    </location>
</feature>
<feature type="strand" evidence="2">
    <location>
        <begin position="333"/>
        <end position="335"/>
    </location>
</feature>
<feature type="helix" evidence="2">
    <location>
        <begin position="341"/>
        <end position="352"/>
    </location>
</feature>
<feature type="strand" evidence="2">
    <location>
        <begin position="357"/>
        <end position="359"/>
    </location>
</feature>
<feature type="helix" evidence="2">
    <location>
        <begin position="366"/>
        <end position="368"/>
    </location>
</feature>
<feature type="strand" evidence="2">
    <location>
        <begin position="374"/>
        <end position="378"/>
    </location>
</feature>
<feature type="strand" evidence="2">
    <location>
        <begin position="383"/>
        <end position="387"/>
    </location>
</feature>
<comment type="function">
    <text evidence="1">Required for the first step of histidine biosynthesis. May allow the feedback regulation of ATP phosphoribosyltransferase activity by histidine.</text>
</comment>
<comment type="pathway">
    <text evidence="1">Amino-acid biosynthesis; L-histidine biosynthesis; L-histidine from 5-phospho-alpha-D-ribose 1-diphosphate: step 1/9.</text>
</comment>
<comment type="subunit">
    <text evidence="1">Heteromultimer composed of HisG and HisZ subunits.</text>
</comment>
<comment type="subcellular location">
    <subcellularLocation>
        <location evidence="1">Cytoplasm</location>
    </subcellularLocation>
</comment>
<comment type="miscellaneous">
    <text>This function is generally fulfilled by the C-terminal part of HisG, which is missing in some bacteria such as this one.</text>
</comment>
<comment type="similarity">
    <text evidence="1">Belongs to the class-II aminoacyl-tRNA synthetase family. HisZ subfamily.</text>
</comment>
<organism>
    <name type="scientific">Acinetobacter baumannii (strain ACICU)</name>
    <dbReference type="NCBI Taxonomy" id="405416"/>
    <lineage>
        <taxon>Bacteria</taxon>
        <taxon>Pseudomonadati</taxon>
        <taxon>Pseudomonadota</taxon>
        <taxon>Gammaproteobacteria</taxon>
        <taxon>Moraxellales</taxon>
        <taxon>Moraxellaceae</taxon>
        <taxon>Acinetobacter</taxon>
        <taxon>Acinetobacter calcoaceticus/baumannii complex</taxon>
    </lineage>
</organism>
<gene>
    <name evidence="1" type="primary">hisZ</name>
    <name type="ordered locus">ACICU_01156</name>
</gene>
<accession>B2HWK9</accession>
<protein>
    <recommendedName>
        <fullName evidence="1">ATP phosphoribosyltransferase regulatory subunit</fullName>
    </recommendedName>
</protein>
<reference key="1">
    <citation type="journal article" date="2008" name="Antimicrob. Agents Chemother.">
        <title>Whole-genome pyrosequencing of an epidemic multidrug-resistant Acinetobacter baumannii strain belonging to the European clone II group.</title>
        <authorList>
            <person name="Iacono M."/>
            <person name="Villa L."/>
            <person name="Fortini D."/>
            <person name="Bordoni R."/>
            <person name="Imperi F."/>
            <person name="Bonnal R.J."/>
            <person name="Sicheritz-Ponten T."/>
            <person name="De Bellis G."/>
            <person name="Visca P."/>
            <person name="Cassone A."/>
            <person name="Carattoli A."/>
        </authorList>
    </citation>
    <scope>NUCLEOTIDE SEQUENCE [LARGE SCALE GENOMIC DNA]</scope>
    <source>
        <strain>ACICU</strain>
    </source>
</reference>